<protein>
    <recommendedName>
        <fullName evidence="1">Exodeoxyribonuclease 7 large subunit</fullName>
        <ecNumber evidence="1">3.1.11.6</ecNumber>
    </recommendedName>
    <alternativeName>
        <fullName evidence="1">Exodeoxyribonuclease VII large subunit</fullName>
        <shortName evidence="1">Exonuclease VII large subunit</shortName>
    </alternativeName>
</protein>
<dbReference type="EC" id="3.1.11.6" evidence="1"/>
<dbReference type="EMBL" id="AE016822">
    <property type="protein sequence ID" value="AAT89447.1"/>
    <property type="status" value="ALT_INIT"/>
    <property type="molecule type" value="Genomic_DNA"/>
</dbReference>
<dbReference type="SMR" id="Q6ADU9"/>
<dbReference type="STRING" id="281090.Lxx16750"/>
<dbReference type="KEGG" id="lxx:Lxx16750"/>
<dbReference type="eggNOG" id="COG1570">
    <property type="taxonomic scope" value="Bacteria"/>
</dbReference>
<dbReference type="HOGENOM" id="CLU_023625_2_1_11"/>
<dbReference type="Proteomes" id="UP000001306">
    <property type="component" value="Chromosome"/>
</dbReference>
<dbReference type="GO" id="GO:0005737">
    <property type="term" value="C:cytoplasm"/>
    <property type="evidence" value="ECO:0007669"/>
    <property type="project" value="UniProtKB-SubCell"/>
</dbReference>
<dbReference type="GO" id="GO:0009318">
    <property type="term" value="C:exodeoxyribonuclease VII complex"/>
    <property type="evidence" value="ECO:0007669"/>
    <property type="project" value="InterPro"/>
</dbReference>
<dbReference type="GO" id="GO:0008855">
    <property type="term" value="F:exodeoxyribonuclease VII activity"/>
    <property type="evidence" value="ECO:0007669"/>
    <property type="project" value="UniProtKB-UniRule"/>
</dbReference>
<dbReference type="GO" id="GO:0003676">
    <property type="term" value="F:nucleic acid binding"/>
    <property type="evidence" value="ECO:0007669"/>
    <property type="project" value="InterPro"/>
</dbReference>
<dbReference type="GO" id="GO:0006308">
    <property type="term" value="P:DNA catabolic process"/>
    <property type="evidence" value="ECO:0007669"/>
    <property type="project" value="UniProtKB-UniRule"/>
</dbReference>
<dbReference type="CDD" id="cd04489">
    <property type="entry name" value="ExoVII_LU_OBF"/>
    <property type="match status" value="1"/>
</dbReference>
<dbReference type="HAMAP" id="MF_00378">
    <property type="entry name" value="Exonuc_7_L"/>
    <property type="match status" value="1"/>
</dbReference>
<dbReference type="InterPro" id="IPR003753">
    <property type="entry name" value="Exonuc_VII_L"/>
</dbReference>
<dbReference type="InterPro" id="IPR020579">
    <property type="entry name" value="Exonuc_VII_lsu_C"/>
</dbReference>
<dbReference type="InterPro" id="IPR025824">
    <property type="entry name" value="OB-fold_nuc-bd_dom"/>
</dbReference>
<dbReference type="NCBIfam" id="TIGR00237">
    <property type="entry name" value="xseA"/>
    <property type="match status" value="1"/>
</dbReference>
<dbReference type="PANTHER" id="PTHR30008">
    <property type="entry name" value="EXODEOXYRIBONUCLEASE 7 LARGE SUBUNIT"/>
    <property type="match status" value="1"/>
</dbReference>
<dbReference type="PANTHER" id="PTHR30008:SF0">
    <property type="entry name" value="EXODEOXYRIBONUCLEASE 7 LARGE SUBUNIT"/>
    <property type="match status" value="1"/>
</dbReference>
<dbReference type="Pfam" id="PF02601">
    <property type="entry name" value="Exonuc_VII_L"/>
    <property type="match status" value="2"/>
</dbReference>
<dbReference type="Pfam" id="PF13742">
    <property type="entry name" value="tRNA_anti_2"/>
    <property type="match status" value="1"/>
</dbReference>
<organism>
    <name type="scientific">Leifsonia xyli subsp. xyli (strain CTCB07)</name>
    <dbReference type="NCBI Taxonomy" id="281090"/>
    <lineage>
        <taxon>Bacteria</taxon>
        <taxon>Bacillati</taxon>
        <taxon>Actinomycetota</taxon>
        <taxon>Actinomycetes</taxon>
        <taxon>Micrococcales</taxon>
        <taxon>Microbacteriaceae</taxon>
        <taxon>Leifsonia</taxon>
    </lineage>
</organism>
<reference key="1">
    <citation type="journal article" date="2004" name="Mol. Plant Microbe Interact.">
        <title>The genome sequence of the Gram-positive sugarcane pathogen Leifsonia xyli subsp. xyli.</title>
        <authorList>
            <person name="Monteiro-Vitorello C.B."/>
            <person name="Camargo L.E.A."/>
            <person name="Van Sluys M.A."/>
            <person name="Kitajima J.P."/>
            <person name="Truffi D."/>
            <person name="do Amaral A.M."/>
            <person name="Harakava R."/>
            <person name="de Oliveira J.C.F."/>
            <person name="Wood D."/>
            <person name="de Oliveira M.C."/>
            <person name="Miyaki C.Y."/>
            <person name="Takita M.A."/>
            <person name="da Silva A.C.R."/>
            <person name="Furlan L.R."/>
            <person name="Carraro D.M."/>
            <person name="Camarotte G."/>
            <person name="Almeida N.F. Jr."/>
            <person name="Carrer H."/>
            <person name="Coutinho L.L."/>
            <person name="El-Dorry H.A."/>
            <person name="Ferro M.I.T."/>
            <person name="Gagliardi P.R."/>
            <person name="Giglioti E."/>
            <person name="Goldman M.H.S."/>
            <person name="Goldman G.H."/>
            <person name="Kimura E.T."/>
            <person name="Ferro E.S."/>
            <person name="Kuramae E.E."/>
            <person name="Lemos E.G.M."/>
            <person name="Lemos M.V.F."/>
            <person name="Mauro S.M.Z."/>
            <person name="Machado M.A."/>
            <person name="Marino C.L."/>
            <person name="Menck C.F."/>
            <person name="Nunes L.R."/>
            <person name="Oliveira R.C."/>
            <person name="Pereira G.G."/>
            <person name="Siqueira W."/>
            <person name="de Souza A.A."/>
            <person name="Tsai S.M."/>
            <person name="Zanca A.S."/>
            <person name="Simpson A.J.G."/>
            <person name="Brumbley S.M."/>
            <person name="Setubal J.C."/>
        </authorList>
    </citation>
    <scope>NUCLEOTIDE SEQUENCE [LARGE SCALE GENOMIC DNA]</scope>
    <source>
        <strain>CTCB07</strain>
    </source>
</reference>
<sequence>MRGTRVTETASAPRMAPGPPTLDDPWPVALLASKIRGWIERLGTAWVEGEITQWGVSGGNVYGKLKDLNEDATVGFTIWSSVKARIPADLKQGDRVIAAVKPNYWLKGGTLTMQVSDMRHVGLGDLLERLERLRAQLRAEGLFRPERKKRLPFLPHTIGLVTGKDSDAEKDVLRNAQLRWPQVRFRTVYAAVQGDRTVPEVTAALRELDADPEVEVIIVARGGGDFQNLLGFSDESLLRAAAGLSTPLVSAIGHEADRPLLDEVADLRASTPTDAAKRVVPDVAEELVRVHQARARIGTRLTHIIRHEIDRIGHLRTRPALASGSWIVDSRAQDLTRFVARGAELVERCVDREAARVAELRGQLRALSPQATLERGYAIVQNAAGRVVAAPGEAPAGTELRITVSGGSLAATAGKALPSPAQGATNGSLAAPRGK</sequence>
<feature type="chain" id="PRO_0000273670" description="Exodeoxyribonuclease 7 large subunit">
    <location>
        <begin position="1"/>
        <end position="435"/>
    </location>
</feature>
<feature type="region of interest" description="Disordered" evidence="2">
    <location>
        <begin position="1"/>
        <end position="21"/>
    </location>
</feature>
<feature type="region of interest" description="Disordered" evidence="2">
    <location>
        <begin position="413"/>
        <end position="435"/>
    </location>
</feature>
<feature type="compositionally biased region" description="Polar residues" evidence="2">
    <location>
        <begin position="1"/>
        <end position="10"/>
    </location>
</feature>
<keyword id="KW-0963">Cytoplasm</keyword>
<keyword id="KW-0269">Exonuclease</keyword>
<keyword id="KW-0378">Hydrolase</keyword>
<keyword id="KW-0540">Nuclease</keyword>
<keyword id="KW-1185">Reference proteome</keyword>
<comment type="function">
    <text evidence="1">Bidirectionally degrades single-stranded DNA into large acid-insoluble oligonucleotides, which are then degraded further into small acid-soluble oligonucleotides.</text>
</comment>
<comment type="catalytic activity">
    <reaction evidence="1">
        <text>Exonucleolytic cleavage in either 5'- to 3'- or 3'- to 5'-direction to yield nucleoside 5'-phosphates.</text>
        <dbReference type="EC" id="3.1.11.6"/>
    </reaction>
</comment>
<comment type="subunit">
    <text evidence="1">Heterooligomer composed of large and small subunits.</text>
</comment>
<comment type="subcellular location">
    <subcellularLocation>
        <location evidence="1">Cytoplasm</location>
    </subcellularLocation>
</comment>
<comment type="similarity">
    <text evidence="1">Belongs to the XseA family.</text>
</comment>
<comment type="sequence caution" evidence="3">
    <conflict type="erroneous initiation">
        <sequence resource="EMBL-CDS" id="AAT89447"/>
    </conflict>
</comment>
<proteinExistence type="inferred from homology"/>
<name>EX7L_LEIXX</name>
<accession>Q6ADU9</accession>
<evidence type="ECO:0000255" key="1">
    <source>
        <dbReference type="HAMAP-Rule" id="MF_00378"/>
    </source>
</evidence>
<evidence type="ECO:0000256" key="2">
    <source>
        <dbReference type="SAM" id="MobiDB-lite"/>
    </source>
</evidence>
<evidence type="ECO:0000305" key="3"/>
<gene>
    <name evidence="1" type="primary">xseA</name>
    <name type="ordered locus">Lxx16750</name>
</gene>